<dbReference type="EC" id="3.4.24.-"/>
<dbReference type="EMBL" id="L42023">
    <property type="protein sequence ID" value="AAC23015.1"/>
    <property type="molecule type" value="Genomic_DNA"/>
</dbReference>
<dbReference type="PIR" id="E64171">
    <property type="entry name" value="E64171"/>
</dbReference>
<dbReference type="RefSeq" id="NP_439519.1">
    <property type="nucleotide sequence ID" value="NC_000907.1"/>
</dbReference>
<dbReference type="SMR" id="P45181"/>
<dbReference type="STRING" id="71421.HI_1368"/>
<dbReference type="EnsemblBacteria" id="AAC23015">
    <property type="protein sequence ID" value="AAC23015"/>
    <property type="gene ID" value="HI_1368"/>
</dbReference>
<dbReference type="KEGG" id="hin:HI_1368"/>
<dbReference type="PATRIC" id="fig|71421.8.peg.1422"/>
<dbReference type="eggNOG" id="COG0612">
    <property type="taxonomic scope" value="Bacteria"/>
</dbReference>
<dbReference type="HOGENOM" id="CLU_008156_0_0_6"/>
<dbReference type="OrthoDB" id="9811314at2"/>
<dbReference type="PhylomeDB" id="P45181"/>
<dbReference type="BioCyc" id="HINF71421:G1GJ1-1393-MONOMER"/>
<dbReference type="Proteomes" id="UP000000579">
    <property type="component" value="Chromosome"/>
</dbReference>
<dbReference type="GO" id="GO:0046872">
    <property type="term" value="F:metal ion binding"/>
    <property type="evidence" value="ECO:0007669"/>
    <property type="project" value="UniProtKB-KW"/>
</dbReference>
<dbReference type="GO" id="GO:0004222">
    <property type="term" value="F:metalloendopeptidase activity"/>
    <property type="evidence" value="ECO:0007669"/>
    <property type="project" value="InterPro"/>
</dbReference>
<dbReference type="GO" id="GO:0006508">
    <property type="term" value="P:proteolysis"/>
    <property type="evidence" value="ECO:0007669"/>
    <property type="project" value="UniProtKB-KW"/>
</dbReference>
<dbReference type="Gene3D" id="3.30.830.10">
    <property type="entry name" value="Metalloenzyme, LuxS/M16 peptidase-like"/>
    <property type="match status" value="4"/>
</dbReference>
<dbReference type="InterPro" id="IPR011249">
    <property type="entry name" value="Metalloenz_LuxS/M16"/>
</dbReference>
<dbReference type="InterPro" id="IPR011765">
    <property type="entry name" value="Pept_M16_N"/>
</dbReference>
<dbReference type="InterPro" id="IPR001431">
    <property type="entry name" value="Pept_M16_Zn_BS"/>
</dbReference>
<dbReference type="InterPro" id="IPR050626">
    <property type="entry name" value="Peptidase_M16"/>
</dbReference>
<dbReference type="InterPro" id="IPR007863">
    <property type="entry name" value="Peptidase_M16_C"/>
</dbReference>
<dbReference type="PANTHER" id="PTHR43690">
    <property type="entry name" value="NARDILYSIN"/>
    <property type="match status" value="1"/>
</dbReference>
<dbReference type="PANTHER" id="PTHR43690:SF17">
    <property type="entry name" value="PROTEIN YHJJ"/>
    <property type="match status" value="1"/>
</dbReference>
<dbReference type="Pfam" id="PF00675">
    <property type="entry name" value="Peptidase_M16"/>
    <property type="match status" value="1"/>
</dbReference>
<dbReference type="Pfam" id="PF05193">
    <property type="entry name" value="Peptidase_M16_C"/>
    <property type="match status" value="2"/>
</dbReference>
<dbReference type="SUPFAM" id="SSF63411">
    <property type="entry name" value="LuxS/MPP-like metallohydrolase"/>
    <property type="match status" value="3"/>
</dbReference>
<dbReference type="PROSITE" id="PS00143">
    <property type="entry name" value="INSULINASE"/>
    <property type="match status" value="1"/>
</dbReference>
<accession>P45181</accession>
<feature type="chain" id="PRO_0000074416" description="Probable zinc protease PqqL">
    <location>
        <begin position="1"/>
        <end position="926"/>
    </location>
</feature>
<feature type="active site" description="Proton acceptor" evidence="2">
    <location>
        <position position="82"/>
    </location>
</feature>
<feature type="binding site" evidence="2">
    <location>
        <position position="79"/>
    </location>
    <ligand>
        <name>Zn(2+)</name>
        <dbReference type="ChEBI" id="CHEBI:29105"/>
    </ligand>
</feature>
<feature type="binding site" evidence="2">
    <location>
        <position position="83"/>
    </location>
    <ligand>
        <name>Zn(2+)</name>
        <dbReference type="ChEBI" id="CHEBI:29105"/>
    </ligand>
</feature>
<feature type="binding site" evidence="2">
    <location>
        <position position="159"/>
    </location>
    <ligand>
        <name>Zn(2+)</name>
        <dbReference type="ChEBI" id="CHEBI:29105"/>
    </ligand>
</feature>
<gene>
    <name type="primary">pqqL</name>
    <name type="ordered locus">HI_1368</name>
</gene>
<comment type="cofactor">
    <cofactor evidence="1">
        <name>Zn(2+)</name>
        <dbReference type="ChEBI" id="CHEBI:29105"/>
    </cofactor>
    <text evidence="1">Binds 1 zinc ion per subunit.</text>
</comment>
<comment type="similarity">
    <text evidence="3">Belongs to the peptidase M16 family.</text>
</comment>
<organism>
    <name type="scientific">Haemophilus influenzae (strain ATCC 51907 / DSM 11121 / KW20 / Rd)</name>
    <dbReference type="NCBI Taxonomy" id="71421"/>
    <lineage>
        <taxon>Bacteria</taxon>
        <taxon>Pseudomonadati</taxon>
        <taxon>Pseudomonadota</taxon>
        <taxon>Gammaproteobacteria</taxon>
        <taxon>Pasteurellales</taxon>
        <taxon>Pasteurellaceae</taxon>
        <taxon>Haemophilus</taxon>
    </lineage>
</organism>
<proteinExistence type="inferred from homology"/>
<evidence type="ECO:0000250" key="1"/>
<evidence type="ECO:0000255" key="2">
    <source>
        <dbReference type="PROSITE-ProRule" id="PRU10096"/>
    </source>
</evidence>
<evidence type="ECO:0000305" key="3"/>
<name>PQQL_HAEIN</name>
<reference key="1">
    <citation type="journal article" date="1995" name="Science">
        <title>Whole-genome random sequencing and assembly of Haemophilus influenzae Rd.</title>
        <authorList>
            <person name="Fleischmann R.D."/>
            <person name="Adams M.D."/>
            <person name="White O."/>
            <person name="Clayton R.A."/>
            <person name="Kirkness E.F."/>
            <person name="Kerlavage A.R."/>
            <person name="Bult C.J."/>
            <person name="Tomb J.-F."/>
            <person name="Dougherty B.A."/>
            <person name="Merrick J.M."/>
            <person name="McKenney K."/>
            <person name="Sutton G.G."/>
            <person name="FitzHugh W."/>
            <person name="Fields C.A."/>
            <person name="Gocayne J.D."/>
            <person name="Scott J.D."/>
            <person name="Shirley R."/>
            <person name="Liu L.-I."/>
            <person name="Glodek A."/>
            <person name="Kelley J.M."/>
            <person name="Weidman J.F."/>
            <person name="Phillips C.A."/>
            <person name="Spriggs T."/>
            <person name="Hedblom E."/>
            <person name="Cotton M.D."/>
            <person name="Utterback T.R."/>
            <person name="Hanna M.C."/>
            <person name="Nguyen D.T."/>
            <person name="Saudek D.M."/>
            <person name="Brandon R.C."/>
            <person name="Fine L.D."/>
            <person name="Fritchman J.L."/>
            <person name="Fuhrmann J.L."/>
            <person name="Geoghagen N.S.M."/>
            <person name="Gnehm C.L."/>
            <person name="McDonald L.A."/>
            <person name="Small K.V."/>
            <person name="Fraser C.M."/>
            <person name="Smith H.O."/>
            <person name="Venter J.C."/>
        </authorList>
    </citation>
    <scope>NUCLEOTIDE SEQUENCE [LARGE SCALE GENOMIC DNA]</scope>
    <source>
        <strain>ATCC 51907 / DSM 11121 / KW20 / Rd</strain>
    </source>
</reference>
<protein>
    <recommendedName>
        <fullName>Probable zinc protease PqqL</fullName>
        <ecNumber>3.4.24.-</ecNumber>
    </recommendedName>
</protein>
<keyword id="KW-0378">Hydrolase</keyword>
<keyword id="KW-0479">Metal-binding</keyword>
<keyword id="KW-0482">Metalloprotease</keyword>
<keyword id="KW-0645">Protease</keyword>
<keyword id="KW-1185">Reference proteome</keyword>
<keyword id="KW-0862">Zinc</keyword>
<sequence>MKKTTALFLLIFSLIACQSLELSPNNNLPFDPNIQHGKLSNGLQYFVLKNTEPKERVYIRLVINAGSMHEDDDQKGIAHLVEHMAFNGSKKYPENQIINALEKLGMKFARDINAFTDFENTVYTLNLDSNNQQKLELAFDVINEWMNNITFLPKDVDGERGVVQEEWRRRLSPMLRIGNKKSAIEMAGSRYVLRDPIGDMDIIKTISAKRVADFYHKWYRPDNMSVIIVGDIDTKQVVKLLKQNLSQENPITKTTLEKIDFNIPLINKWRLDSISEQGTTIPSIELSFFENTIETNTLASYKQELIQQITTRLLNLRLQQWEKETENGVDSANFYRTHLGKETLQSIFSLQLIDTQYSKTIDKLFAFIASIKQQGFTQNELSGEIKRLTQLNEKQLNIRSGSLKIADDLITSVANKQVVLSVNDRYELNKRFLSQITLADLQRTLNQTLALKAKLLLITQPLPQKALPFDVAEIETRWNNVMEMQQHQWDEKKQIEKLPHLTFNTGSLSQEKYWDRGDIYEFRLSNGSKLIYHYSDKTPNQVHFRAVTQGGLRSIPNKDYHLLRAAVSVVDETGVGELSLSAVNQIFSRDPLVIATVIDDDKQGFTGVSKPKDLENLLTLFRLKLRSSPISDLALEKYRRETRDYFKQIDLETQFMQAVSKLRFPNIETVYTQKQAQQLSFDKNQLNNAYQHYILDKTDFTYFIIGDIELNQVKKLAERYLASIESKTQIRHFVPTIIHTPTQSFIMNGLKEPRADVEIYLTADNTWRTEQKYLFNILADIVQEKLRLILREKVSGIYSVNSWFMQDVYAPQIEGKIEFSCDPKRVEELTYLTNQVLDDIIKNGIDENLLRKKLAEQHTQIRREFDSLVSIASIIEESYWQQDNPDAIYTYQHLDQLATKATIDALAQKALKKSGRFVSILKAASY</sequence>